<feature type="chain" id="PRO_0000053608" description="COUP transcription factor 2">
    <location>
        <begin position="1"/>
        <end position="414"/>
    </location>
</feature>
<feature type="domain" description="NR LBD" evidence="4">
    <location>
        <begin position="177"/>
        <end position="403"/>
    </location>
</feature>
<feature type="DNA-binding region" description="Nuclear receptor" evidence="3">
    <location>
        <begin position="76"/>
        <end position="151"/>
    </location>
</feature>
<feature type="zinc finger region" description="NR C4-type" evidence="3">
    <location>
        <begin position="79"/>
        <end position="99"/>
    </location>
</feature>
<feature type="zinc finger region" description="NR C4-type" evidence="3">
    <location>
        <begin position="115"/>
        <end position="139"/>
    </location>
</feature>
<feature type="region of interest" description="Disordered" evidence="5">
    <location>
        <begin position="1"/>
        <end position="72"/>
    </location>
</feature>
<feature type="region of interest" description="Interaction with ZFPM2" evidence="1">
    <location>
        <begin position="117"/>
        <end position="414"/>
    </location>
</feature>
<feature type="region of interest" description="Important for dimerization">
    <location>
        <begin position="337"/>
        <end position="414"/>
    </location>
</feature>
<feature type="compositionally biased region" description="Pro residues" evidence="5">
    <location>
        <begin position="27"/>
        <end position="37"/>
    </location>
</feature>
<feature type="compositionally biased region" description="Low complexity" evidence="5">
    <location>
        <begin position="38"/>
        <end position="54"/>
    </location>
</feature>
<feature type="modified residue" description="Phosphothreonine" evidence="2">
    <location>
        <position position="51"/>
    </location>
</feature>
<reference key="1">
    <citation type="submission" date="1997-05" db="EMBL/GenBank/DDBJ databases">
        <title>Cloning and expression of COUPb and COUPg in the rat anterior pituitary.</title>
        <authorList>
            <person name="Boutin J.-M."/>
            <person name="Ronsin B."/>
            <person name="Devost D."/>
            <person name="Lipkin S.M."/>
            <person name="Rosenfeld M.G."/>
            <person name="Morel G."/>
        </authorList>
    </citation>
    <scope>NUCLEOTIDE SEQUENCE [MRNA]</scope>
    <source>
        <tissue>Pituitary</tissue>
    </source>
</reference>
<reference key="2">
    <citation type="journal article" date="1996" name="J. Biol. Chem.">
        <title>A p56(lck) ligand serves as a coactivator of an orphan nuclear hormone receptor.</title>
        <authorList>
            <person name="Marcus S.L."/>
            <person name="Winrow C.J."/>
            <person name="Capone J.P."/>
            <person name="Rachubinski R.A."/>
        </authorList>
    </citation>
    <scope>INTERACTION WITH SQSTM1</scope>
</reference>
<name>COT2_RAT</name>
<proteinExistence type="evidence at protein level"/>
<dbReference type="EMBL" id="AF003944">
    <property type="protein sequence ID" value="AAB61297.1"/>
    <property type="molecule type" value="mRNA"/>
</dbReference>
<dbReference type="RefSeq" id="NP_542956.1">
    <property type="nucleotide sequence ID" value="NM_080778.2"/>
</dbReference>
<dbReference type="SMR" id="O09018"/>
<dbReference type="BioGRID" id="250245">
    <property type="interactions" value="1"/>
</dbReference>
<dbReference type="FunCoup" id="O09018">
    <property type="interactions" value="748"/>
</dbReference>
<dbReference type="STRING" id="10116.ENSRNOP00000014152"/>
<dbReference type="GlyGen" id="O09018">
    <property type="glycosylation" value="1 site"/>
</dbReference>
<dbReference type="PhosphoSitePlus" id="O09018"/>
<dbReference type="PaxDb" id="10116-ENSRNOP00000014152"/>
<dbReference type="Ensembl" id="ENSRNOT00000014152.4">
    <property type="protein sequence ID" value="ENSRNOP00000014152.1"/>
    <property type="gene ID" value="ENSRNOG00000010308.6"/>
</dbReference>
<dbReference type="GeneID" id="113984"/>
<dbReference type="KEGG" id="rno:113984"/>
<dbReference type="UCSC" id="RGD:69305">
    <property type="organism name" value="rat"/>
</dbReference>
<dbReference type="AGR" id="RGD:69305"/>
<dbReference type="CTD" id="7026"/>
<dbReference type="RGD" id="69305">
    <property type="gene designation" value="Nr2f2"/>
</dbReference>
<dbReference type="eggNOG" id="KOG3575">
    <property type="taxonomic scope" value="Eukaryota"/>
</dbReference>
<dbReference type="GeneTree" id="ENSGT00940000157540"/>
<dbReference type="InParanoid" id="O09018"/>
<dbReference type="OMA" id="QHIECTV"/>
<dbReference type="OrthoDB" id="5873264at2759"/>
<dbReference type="PhylomeDB" id="O09018"/>
<dbReference type="TreeFam" id="TF352097"/>
<dbReference type="PRO" id="PR:O09018"/>
<dbReference type="Proteomes" id="UP000002494">
    <property type="component" value="Chromosome 1"/>
</dbReference>
<dbReference type="Bgee" id="ENSRNOG00000010308">
    <property type="expression patterns" value="Expressed in stomach and 18 other cell types or tissues"/>
</dbReference>
<dbReference type="ExpressionAtlas" id="O09018">
    <property type="expression patterns" value="baseline and differential"/>
</dbReference>
<dbReference type="GO" id="GO:0005829">
    <property type="term" value="C:cytosol"/>
    <property type="evidence" value="ECO:0007669"/>
    <property type="project" value="Ensembl"/>
</dbReference>
<dbReference type="GO" id="GO:0005654">
    <property type="term" value="C:nucleoplasm"/>
    <property type="evidence" value="ECO:0007669"/>
    <property type="project" value="Ensembl"/>
</dbReference>
<dbReference type="GO" id="GO:0005634">
    <property type="term" value="C:nucleus"/>
    <property type="evidence" value="ECO:0000266"/>
    <property type="project" value="RGD"/>
</dbReference>
<dbReference type="GO" id="GO:0003677">
    <property type="term" value="F:DNA binding"/>
    <property type="evidence" value="ECO:0000266"/>
    <property type="project" value="RGD"/>
</dbReference>
<dbReference type="GO" id="GO:0003700">
    <property type="term" value="F:DNA-binding transcription factor activity"/>
    <property type="evidence" value="ECO:0000266"/>
    <property type="project" value="RGD"/>
</dbReference>
<dbReference type="GO" id="GO:0004879">
    <property type="term" value="F:nuclear receptor activity"/>
    <property type="evidence" value="ECO:0000250"/>
    <property type="project" value="UniProtKB"/>
</dbReference>
<dbReference type="GO" id="GO:0042803">
    <property type="term" value="F:protein homodimerization activity"/>
    <property type="evidence" value="ECO:0000266"/>
    <property type="project" value="RGD"/>
</dbReference>
<dbReference type="GO" id="GO:0001972">
    <property type="term" value="F:retinoic acid binding"/>
    <property type="evidence" value="ECO:0000250"/>
    <property type="project" value="UniProtKB"/>
</dbReference>
<dbReference type="GO" id="GO:0000978">
    <property type="term" value="F:RNA polymerase II cis-regulatory region sequence-specific DNA binding"/>
    <property type="evidence" value="ECO:0000318"/>
    <property type="project" value="GO_Central"/>
</dbReference>
<dbReference type="GO" id="GO:0043565">
    <property type="term" value="F:sequence-specific DNA binding"/>
    <property type="evidence" value="ECO:0000314"/>
    <property type="project" value="RGD"/>
</dbReference>
<dbReference type="GO" id="GO:0008270">
    <property type="term" value="F:zinc ion binding"/>
    <property type="evidence" value="ECO:0007669"/>
    <property type="project" value="UniProtKB-KW"/>
</dbReference>
<dbReference type="GO" id="GO:0009952">
    <property type="term" value="P:anterior/posterior pattern specification"/>
    <property type="evidence" value="ECO:0000266"/>
    <property type="project" value="RGD"/>
</dbReference>
<dbReference type="GO" id="GO:0048514">
    <property type="term" value="P:blood vessel morphogenesis"/>
    <property type="evidence" value="ECO:0000266"/>
    <property type="project" value="RGD"/>
</dbReference>
<dbReference type="GO" id="GO:0030154">
    <property type="term" value="P:cell differentiation"/>
    <property type="evidence" value="ECO:0000318"/>
    <property type="project" value="GO_Central"/>
</dbReference>
<dbReference type="GO" id="GO:0008585">
    <property type="term" value="P:female gonad development"/>
    <property type="evidence" value="ECO:0000250"/>
    <property type="project" value="UniProtKB"/>
</dbReference>
<dbReference type="GO" id="GO:0009566">
    <property type="term" value="P:fertilization"/>
    <property type="evidence" value="ECO:0000266"/>
    <property type="project" value="RGD"/>
</dbReference>
<dbReference type="GO" id="GO:0030900">
    <property type="term" value="P:forebrain development"/>
    <property type="evidence" value="ECO:0000266"/>
    <property type="project" value="RGD"/>
</dbReference>
<dbReference type="GO" id="GO:0001701">
    <property type="term" value="P:in utero embryonic development"/>
    <property type="evidence" value="ECO:0000266"/>
    <property type="project" value="RGD"/>
</dbReference>
<dbReference type="GO" id="GO:1904936">
    <property type="term" value="P:interneuron migration"/>
    <property type="evidence" value="ECO:0000266"/>
    <property type="project" value="RGD"/>
</dbReference>
<dbReference type="GO" id="GO:0001945">
    <property type="term" value="P:lymph vessel development"/>
    <property type="evidence" value="ECO:0000266"/>
    <property type="project" value="RGD"/>
</dbReference>
<dbReference type="GO" id="GO:0060838">
    <property type="term" value="P:lymphatic endothelial cell fate commitment"/>
    <property type="evidence" value="ECO:0000266"/>
    <property type="project" value="RGD"/>
</dbReference>
<dbReference type="GO" id="GO:0001893">
    <property type="term" value="P:maternal placenta development"/>
    <property type="evidence" value="ECO:0000266"/>
    <property type="project" value="RGD"/>
</dbReference>
<dbReference type="GO" id="GO:0045892">
    <property type="term" value="P:negative regulation of DNA-templated transcription"/>
    <property type="evidence" value="ECO:0000266"/>
    <property type="project" value="RGD"/>
</dbReference>
<dbReference type="GO" id="GO:0010596">
    <property type="term" value="P:negative regulation of endothelial cell migration"/>
    <property type="evidence" value="ECO:0000266"/>
    <property type="project" value="RGD"/>
</dbReference>
<dbReference type="GO" id="GO:0001937">
    <property type="term" value="P:negative regulation of endothelial cell proliferation"/>
    <property type="evidence" value="ECO:0000266"/>
    <property type="project" value="RGD"/>
</dbReference>
<dbReference type="GO" id="GO:0000122">
    <property type="term" value="P:negative regulation of transcription by RNA polymerase II"/>
    <property type="evidence" value="ECO:0000266"/>
    <property type="project" value="RGD"/>
</dbReference>
<dbReference type="GO" id="GO:0007399">
    <property type="term" value="P:nervous system development"/>
    <property type="evidence" value="ECO:0000318"/>
    <property type="project" value="GO_Central"/>
</dbReference>
<dbReference type="GO" id="GO:0001764">
    <property type="term" value="P:neuron migration"/>
    <property type="evidence" value="ECO:0000266"/>
    <property type="project" value="RGD"/>
</dbReference>
<dbReference type="GO" id="GO:0060674">
    <property type="term" value="P:placenta blood vessel development"/>
    <property type="evidence" value="ECO:0000266"/>
    <property type="project" value="RGD"/>
</dbReference>
<dbReference type="GO" id="GO:0045893">
    <property type="term" value="P:positive regulation of DNA-templated transcription"/>
    <property type="evidence" value="ECO:0000250"/>
    <property type="project" value="UniProtKB"/>
</dbReference>
<dbReference type="GO" id="GO:0003084">
    <property type="term" value="P:positive regulation of systemic arterial blood pressure"/>
    <property type="evidence" value="ECO:0000315"/>
    <property type="project" value="RGD"/>
</dbReference>
<dbReference type="GO" id="GO:0045944">
    <property type="term" value="P:positive regulation of transcription by RNA polymerase II"/>
    <property type="evidence" value="ECO:0000266"/>
    <property type="project" value="RGD"/>
</dbReference>
<dbReference type="GO" id="GO:0009956">
    <property type="term" value="P:radial pattern formation"/>
    <property type="evidence" value="ECO:0000266"/>
    <property type="project" value="RGD"/>
</dbReference>
<dbReference type="GO" id="GO:0006355">
    <property type="term" value="P:regulation of DNA-templated transcription"/>
    <property type="evidence" value="ECO:0000315"/>
    <property type="project" value="RGD"/>
</dbReference>
<dbReference type="GO" id="GO:0006357">
    <property type="term" value="P:regulation of transcription by RNA polymerase II"/>
    <property type="evidence" value="ECO:0000266"/>
    <property type="project" value="RGD"/>
</dbReference>
<dbReference type="GO" id="GO:0032355">
    <property type="term" value="P:response to estradiol"/>
    <property type="evidence" value="ECO:0000270"/>
    <property type="project" value="RGD"/>
</dbReference>
<dbReference type="GO" id="GO:0007519">
    <property type="term" value="P:skeletal muscle tissue development"/>
    <property type="evidence" value="ECO:0000266"/>
    <property type="project" value="RGD"/>
</dbReference>
<dbReference type="GO" id="GO:0060707">
    <property type="term" value="P:trophoblast giant cell differentiation"/>
    <property type="evidence" value="ECO:0000266"/>
    <property type="project" value="RGD"/>
</dbReference>
<dbReference type="CDD" id="cd06958">
    <property type="entry name" value="NR_DBD_COUP_TF"/>
    <property type="match status" value="1"/>
</dbReference>
<dbReference type="CDD" id="cd06948">
    <property type="entry name" value="NR_LBD_COUP-TF"/>
    <property type="match status" value="1"/>
</dbReference>
<dbReference type="FunFam" id="1.10.565.10:FF:000003">
    <property type="entry name" value="Coup transcription factor 2 isoform 1"/>
    <property type="match status" value="1"/>
</dbReference>
<dbReference type="FunFam" id="3.30.50.10:FF:000016">
    <property type="entry name" value="Nuclear receptor subfamily 2 group F member 1"/>
    <property type="match status" value="1"/>
</dbReference>
<dbReference type="Gene3D" id="3.30.50.10">
    <property type="entry name" value="Erythroid Transcription Factor GATA-1, subunit A"/>
    <property type="match status" value="1"/>
</dbReference>
<dbReference type="Gene3D" id="1.10.565.10">
    <property type="entry name" value="Retinoid X Receptor"/>
    <property type="match status" value="1"/>
</dbReference>
<dbReference type="InterPro" id="IPR035500">
    <property type="entry name" value="NHR-like_dom_sf"/>
</dbReference>
<dbReference type="InterPro" id="IPR000536">
    <property type="entry name" value="Nucl_hrmn_rcpt_lig-bd"/>
</dbReference>
<dbReference type="InterPro" id="IPR050274">
    <property type="entry name" value="Nuclear_hormone_rcpt_NR2"/>
</dbReference>
<dbReference type="InterPro" id="IPR001723">
    <property type="entry name" value="Nuclear_hrmn_rcpt"/>
</dbReference>
<dbReference type="InterPro" id="IPR001628">
    <property type="entry name" value="Znf_hrmn_rcpt"/>
</dbReference>
<dbReference type="InterPro" id="IPR013088">
    <property type="entry name" value="Znf_NHR/GATA"/>
</dbReference>
<dbReference type="PANTHER" id="PTHR24083">
    <property type="entry name" value="NUCLEAR HORMONE RECEPTOR"/>
    <property type="match status" value="1"/>
</dbReference>
<dbReference type="Pfam" id="PF00104">
    <property type="entry name" value="Hormone_recep"/>
    <property type="match status" value="1"/>
</dbReference>
<dbReference type="Pfam" id="PF00105">
    <property type="entry name" value="zf-C4"/>
    <property type="match status" value="1"/>
</dbReference>
<dbReference type="PRINTS" id="PR01282">
    <property type="entry name" value="COUPTNFACTOR"/>
</dbReference>
<dbReference type="PRINTS" id="PR00398">
    <property type="entry name" value="STRDHORMONER"/>
</dbReference>
<dbReference type="PRINTS" id="PR00047">
    <property type="entry name" value="STROIDFINGER"/>
</dbReference>
<dbReference type="SMART" id="SM00430">
    <property type="entry name" value="HOLI"/>
    <property type="match status" value="1"/>
</dbReference>
<dbReference type="SMART" id="SM00399">
    <property type="entry name" value="ZnF_C4"/>
    <property type="match status" value="1"/>
</dbReference>
<dbReference type="SUPFAM" id="SSF57716">
    <property type="entry name" value="Glucocorticoid receptor-like (DNA-binding domain)"/>
    <property type="match status" value="1"/>
</dbReference>
<dbReference type="SUPFAM" id="SSF48508">
    <property type="entry name" value="Nuclear receptor ligand-binding domain"/>
    <property type="match status" value="1"/>
</dbReference>
<dbReference type="PROSITE" id="PS51843">
    <property type="entry name" value="NR_LBD"/>
    <property type="match status" value="1"/>
</dbReference>
<dbReference type="PROSITE" id="PS00031">
    <property type="entry name" value="NUCLEAR_REC_DBD_1"/>
    <property type="match status" value="1"/>
</dbReference>
<dbReference type="PROSITE" id="PS51030">
    <property type="entry name" value="NUCLEAR_REC_DBD_2"/>
    <property type="match status" value="1"/>
</dbReference>
<gene>
    <name type="primary">Nr2f2</name>
    <name type="synonym">Arp1</name>
    <name type="synonym">Tfcoup2</name>
</gene>
<accession>O09018</accession>
<keyword id="KW-0010">Activator</keyword>
<keyword id="KW-0238">DNA-binding</keyword>
<keyword id="KW-0479">Metal-binding</keyword>
<keyword id="KW-0539">Nucleus</keyword>
<keyword id="KW-0597">Phosphoprotein</keyword>
<keyword id="KW-0675">Receptor</keyword>
<keyword id="KW-1185">Reference proteome</keyword>
<keyword id="KW-0804">Transcription</keyword>
<keyword id="KW-0805">Transcription regulation</keyword>
<keyword id="KW-0862">Zinc</keyword>
<keyword id="KW-0863">Zinc-finger</keyword>
<sequence>MAMVVSTWRDPQDEVPGSQGSQASQAPPVPGPPPGAPHTPQTPGQGGPASTPAQTAAGSQGGPGGPGSDKQQQQQHIECVVCGDKSSGKHYGQFTCEGCKSFFKRSVRRNLSYTCRANRNCPIDQHHRNQCQYCRLKKCLKVGMRREAVQRGRMPPTQPTHGQFALTNGDPLNCHSYLSGYISLLLRAEPYPTSRFGSQCMQPNNIMGIENICELAARMLFSAVEWARNIPFFPDLQITDQVALLRLTWSELFVLNAAQCSMPLHVAPLLAAAGLHASPMSADRVVAFMDHIRIFQEQVEKLKALHVDSAEYSCLKAIVLFTSDACGLSDVAHVESLQEKSQCALEEYVRSQYPNQPTRFGKLLLRLPSLRTVSSSVIEQLFFVRLVGKTPIETLIRDMLLSGSSFNWPYMAIQ</sequence>
<protein>
    <recommendedName>
        <fullName>COUP transcription factor 2</fullName>
        <shortName>COUP-TF2</shortName>
    </recommendedName>
    <alternativeName>
        <fullName>Apolipoprotein A-I regulatory protein 1</fullName>
        <shortName>ARP-1</shortName>
    </alternativeName>
    <alternativeName>
        <fullName>COUP transcription factor II</fullName>
        <shortName>COUP-TF II</shortName>
    </alternativeName>
    <alternativeName>
        <fullName>COUPb</fullName>
    </alternativeName>
    <alternativeName>
        <fullName>Nuclear receptor subfamily 2 group F member 2</fullName>
    </alternativeName>
    <alternativeName>
        <fullName>Ovalbumin upstream promoter beta nuclear receptor</fullName>
    </alternativeName>
</protein>
<evidence type="ECO:0000250" key="1"/>
<evidence type="ECO:0000250" key="2">
    <source>
        <dbReference type="UniProtKB" id="P24468"/>
    </source>
</evidence>
<evidence type="ECO:0000255" key="3">
    <source>
        <dbReference type="PROSITE-ProRule" id="PRU00407"/>
    </source>
</evidence>
<evidence type="ECO:0000255" key="4">
    <source>
        <dbReference type="PROSITE-ProRule" id="PRU01189"/>
    </source>
</evidence>
<evidence type="ECO:0000256" key="5">
    <source>
        <dbReference type="SAM" id="MobiDB-lite"/>
    </source>
</evidence>
<evidence type="ECO:0000305" key="6"/>
<organism>
    <name type="scientific">Rattus norvegicus</name>
    <name type="common">Rat</name>
    <dbReference type="NCBI Taxonomy" id="10116"/>
    <lineage>
        <taxon>Eukaryota</taxon>
        <taxon>Metazoa</taxon>
        <taxon>Chordata</taxon>
        <taxon>Craniata</taxon>
        <taxon>Vertebrata</taxon>
        <taxon>Euteleostomi</taxon>
        <taxon>Mammalia</taxon>
        <taxon>Eutheria</taxon>
        <taxon>Euarchontoglires</taxon>
        <taxon>Glires</taxon>
        <taxon>Rodentia</taxon>
        <taxon>Myomorpha</taxon>
        <taxon>Muroidea</taxon>
        <taxon>Muridae</taxon>
        <taxon>Murinae</taxon>
        <taxon>Rattus</taxon>
    </lineage>
</organism>
<comment type="function">
    <text evidence="2">Ligand-activated transcription factor. Activated by high concentrations of 9-cis-retinoic acid and all-trans-retinoic acid, but not by dexamethasone, cortisol or progesterone (in vitro). Regulation of the apolipoprotein A-I gene transcription. Binds to DNA site A. May be required to establish ovary identity during early gonad development.</text>
</comment>
<comment type="subunit">
    <text evidence="1">Interacts with SQSTM1. Binds DNA as a dimer; homodimer or heterodimer with NR2F6. Interacts with NCOA1, NCOA2, NCOA3 and PPARGC1A. Interacts with ZFPM2 (By similarity).</text>
</comment>
<comment type="subcellular location">
    <subcellularLocation>
        <location>Nucleus</location>
    </subcellularLocation>
</comment>
<comment type="similarity">
    <text evidence="6">Belongs to the nuclear hormone receptor family. NR2 subfamily.</text>
</comment>